<organism>
    <name type="scientific">Salmonella typhimurium (strain LT2 / SGSC1412 / ATCC 700720)</name>
    <dbReference type="NCBI Taxonomy" id="99287"/>
    <lineage>
        <taxon>Bacteria</taxon>
        <taxon>Pseudomonadati</taxon>
        <taxon>Pseudomonadota</taxon>
        <taxon>Gammaproteobacteria</taxon>
        <taxon>Enterobacterales</taxon>
        <taxon>Enterobacteriaceae</taxon>
        <taxon>Salmonella</taxon>
    </lineage>
</organism>
<feature type="chain" id="PRO_0000154139" description="Aminodeoxychorismate synthase component 1">
    <location>
        <begin position="1"/>
        <end position="454"/>
    </location>
</feature>
<feature type="active site" description="Proton donor" evidence="1">
    <location>
        <position position="259"/>
    </location>
</feature>
<feature type="active site" description="N6-(4-deoxychorismate)-lysine intermediate" evidence="1">
    <location>
        <position position="275"/>
    </location>
</feature>
<feature type="binding site" evidence="1">
    <location>
        <position position="37"/>
    </location>
    <ligand>
        <name>L-tryptophan</name>
        <dbReference type="ChEBI" id="CHEBI:57912"/>
    </ligand>
</feature>
<feature type="binding site" evidence="1">
    <location>
        <begin position="44"/>
        <end position="47"/>
    </location>
    <ligand>
        <name>L-tryptophan</name>
        <dbReference type="ChEBI" id="CHEBI:57912"/>
    </ligand>
</feature>
<feature type="binding site" evidence="1">
    <location>
        <begin position="241"/>
        <end position="243"/>
    </location>
    <ligand>
        <name>L-tryptophan</name>
        <dbReference type="ChEBI" id="CHEBI:57912"/>
    </ligand>
</feature>
<name>PABB_SALTY</name>
<proteinExistence type="inferred from homology"/>
<protein>
    <recommendedName>
        <fullName>Aminodeoxychorismate synthase component 1</fullName>
        <shortName>ADC synthase</shortName>
        <shortName>ADCS</shortName>
        <ecNumber>2.6.1.85</ecNumber>
    </recommendedName>
    <alternativeName>
        <fullName>4-amino-4-deoxychorismate synthase component 1</fullName>
    </alternativeName>
</protein>
<gene>
    <name type="primary">pabB</name>
    <name type="ordered locus">STM1824</name>
</gene>
<keyword id="KW-0289">Folate biosynthesis</keyword>
<keyword id="KW-0460">Magnesium</keyword>
<keyword id="KW-1185">Reference proteome</keyword>
<keyword id="KW-0808">Transferase</keyword>
<comment type="function">
    <text evidence="1">Part of a heterodimeric complex that catalyzes the two-step biosynthesis of 4-amino-4-deoxychorismate (ADC), a precursor of p-aminobenzoate (PABA) and tetrahydrofolate. In the first step, a glutamine amidotransferase (PabA) generates ammonia as a substrate that, along with chorismate, is used in the second step, catalyzed by aminodeoxychorismate synthase (PabB) to produce ADC (By similarity).</text>
</comment>
<comment type="catalytic activity">
    <reaction>
        <text>chorismate + L-glutamine = 4-amino-4-deoxychorismate + L-glutamate</text>
        <dbReference type="Rhea" id="RHEA:11672"/>
        <dbReference type="ChEBI" id="CHEBI:29748"/>
        <dbReference type="ChEBI" id="CHEBI:29985"/>
        <dbReference type="ChEBI" id="CHEBI:58359"/>
        <dbReference type="ChEBI" id="CHEBI:58406"/>
        <dbReference type="EC" id="2.6.1.85"/>
    </reaction>
</comment>
<comment type="cofactor">
    <cofactor evidence="1">
        <name>Mg(2+)</name>
        <dbReference type="ChEBI" id="CHEBI:18420"/>
    </cofactor>
</comment>
<comment type="pathway">
    <text>Cofactor biosynthesis; tetrahydrofolate biosynthesis; 4-aminobenzoate from chorismate: step 1/2.</text>
</comment>
<comment type="subunit">
    <text evidence="1">Monomer. Heterodimer consisting of two non-identical subunits: a glutamine amidotransferase subunit (PabA) and a aminodeoxychorismate synthase subunit (PabB) (By similarity).</text>
</comment>
<comment type="similarity">
    <text evidence="2">Belongs to the anthranilate synthase component I family.</text>
</comment>
<sequence>MMKTLSPTVITLPWRPDAAEHYFAPVNHLPWAMLLHSGDAIHPYNRFDILVADPVTTLTTRAQETTVCTARTTTVTLDDPLHVLQTQLEALPFHPQPDPDLPFQGGALGLFGYDLGRRFEILPDTAARDIALPDMAIGLYDWALIVDHQKQVVSLISYHDADARYRWLTSQRAPTRTPFRLTSAWQSNMTRCEYGEKFRQVQAWLHSGDCYQVNLSQRFQASYEGDEWQAFERLNRANRAPFSAFLRLHDGAILSLSPERFIQLENGHIQTRPIKGTLPRLNDPQADRQQAQKLANSMKDRAENLMIVDLMRNDIGRVAVPGSVKVPELFVVEPFPAVHHLVSTITARLPDSLHATDLLRAAFPGGSITGAPKVRAMEIIDELEPQRRNAWCGSIGYLSFCGKMDTSITIRTVTATQGQLYCSAGGGIVADSNEEAEYQETFDKVNRILHPLEN</sequence>
<dbReference type="EC" id="2.6.1.85"/>
<dbReference type="EMBL" id="M22079">
    <property type="protein sequence ID" value="AAA88618.1"/>
    <property type="molecule type" value="Genomic_DNA"/>
</dbReference>
<dbReference type="EMBL" id="AE006468">
    <property type="protein sequence ID" value="AAL20739.1"/>
    <property type="molecule type" value="Genomic_DNA"/>
</dbReference>
<dbReference type="PIR" id="A31132">
    <property type="entry name" value="A31132"/>
</dbReference>
<dbReference type="RefSeq" id="NP_460780.1">
    <property type="nucleotide sequence ID" value="NC_003197.2"/>
</dbReference>
<dbReference type="RefSeq" id="WP_000978464.1">
    <property type="nucleotide sequence ID" value="NC_003197.2"/>
</dbReference>
<dbReference type="SMR" id="P12680"/>
<dbReference type="STRING" id="99287.STM1824"/>
<dbReference type="PaxDb" id="99287-STM1824"/>
<dbReference type="GeneID" id="1253343"/>
<dbReference type="KEGG" id="stm:STM1824"/>
<dbReference type="PATRIC" id="fig|99287.12.peg.1924"/>
<dbReference type="HOGENOM" id="CLU_006493_7_2_6"/>
<dbReference type="OMA" id="HGRMDTS"/>
<dbReference type="PhylomeDB" id="P12680"/>
<dbReference type="BioCyc" id="SENT99287:STM1824-MONOMER"/>
<dbReference type="UniPathway" id="UPA00077">
    <property type="reaction ID" value="UER00149"/>
</dbReference>
<dbReference type="Proteomes" id="UP000001014">
    <property type="component" value="Chromosome"/>
</dbReference>
<dbReference type="GO" id="GO:0046820">
    <property type="term" value="F:4-amino-4-deoxychorismate synthase activity"/>
    <property type="evidence" value="ECO:0000250"/>
    <property type="project" value="UniProtKB"/>
</dbReference>
<dbReference type="GO" id="GO:0000287">
    <property type="term" value="F:magnesium ion binding"/>
    <property type="evidence" value="ECO:0000250"/>
    <property type="project" value="UniProtKB"/>
</dbReference>
<dbReference type="GO" id="GO:0046656">
    <property type="term" value="P:folic acid biosynthetic process"/>
    <property type="evidence" value="ECO:0007669"/>
    <property type="project" value="UniProtKB-KW"/>
</dbReference>
<dbReference type="GO" id="GO:0000162">
    <property type="term" value="P:L-tryptophan biosynthetic process"/>
    <property type="evidence" value="ECO:0000318"/>
    <property type="project" value="GO_Central"/>
</dbReference>
<dbReference type="GO" id="GO:0046654">
    <property type="term" value="P:tetrahydrofolate biosynthetic process"/>
    <property type="evidence" value="ECO:0000250"/>
    <property type="project" value="UniProtKB"/>
</dbReference>
<dbReference type="FunFam" id="3.60.120.10:FF:000004">
    <property type="entry name" value="Aminodeoxychorismate synthase, component I"/>
    <property type="match status" value="1"/>
</dbReference>
<dbReference type="Gene3D" id="3.60.120.10">
    <property type="entry name" value="Anthranilate synthase"/>
    <property type="match status" value="1"/>
</dbReference>
<dbReference type="InterPro" id="IPR005802">
    <property type="entry name" value="ADC_synth_comp_1"/>
</dbReference>
<dbReference type="InterPro" id="IPR005801">
    <property type="entry name" value="ADC_synthase"/>
</dbReference>
<dbReference type="InterPro" id="IPR019999">
    <property type="entry name" value="Anth_synth_I-like"/>
</dbReference>
<dbReference type="InterPro" id="IPR006805">
    <property type="entry name" value="Anth_synth_I_N"/>
</dbReference>
<dbReference type="InterPro" id="IPR015890">
    <property type="entry name" value="Chorismate_C"/>
</dbReference>
<dbReference type="NCBIfam" id="TIGR00553">
    <property type="entry name" value="pabB"/>
    <property type="match status" value="1"/>
</dbReference>
<dbReference type="NCBIfam" id="NF012009">
    <property type="entry name" value="PRK15465.1"/>
    <property type="match status" value="1"/>
</dbReference>
<dbReference type="PANTHER" id="PTHR11236">
    <property type="entry name" value="AMINOBENZOATE/ANTHRANILATE SYNTHASE"/>
    <property type="match status" value="1"/>
</dbReference>
<dbReference type="PANTHER" id="PTHR11236:SF50">
    <property type="entry name" value="AMINODEOXYCHORISMATE SYNTHASE COMPONENT 1"/>
    <property type="match status" value="1"/>
</dbReference>
<dbReference type="Pfam" id="PF04715">
    <property type="entry name" value="Anth_synt_I_N"/>
    <property type="match status" value="1"/>
</dbReference>
<dbReference type="Pfam" id="PF00425">
    <property type="entry name" value="Chorismate_bind"/>
    <property type="match status" value="1"/>
</dbReference>
<dbReference type="PRINTS" id="PR00095">
    <property type="entry name" value="ANTSNTHASEI"/>
</dbReference>
<dbReference type="SUPFAM" id="SSF56322">
    <property type="entry name" value="ADC synthase"/>
    <property type="match status" value="1"/>
</dbReference>
<accession>P12680</accession>
<evidence type="ECO:0000250" key="1"/>
<evidence type="ECO:0000305" key="2"/>
<reference key="1">
    <citation type="journal article" date="1988" name="Mol. Biol. Evol.">
        <title>Evolution of aminobenzoate synthases: nucleotide sequences of Salmonella typhimurium and Klebsiella aerogenes pabB.</title>
        <authorList>
            <person name="Goncharoff P."/>
            <person name="Nichols B.P."/>
        </authorList>
    </citation>
    <scope>NUCLEOTIDE SEQUENCE [GENOMIC DNA]</scope>
</reference>
<reference key="2">
    <citation type="journal article" date="2001" name="Nature">
        <title>Complete genome sequence of Salmonella enterica serovar Typhimurium LT2.</title>
        <authorList>
            <person name="McClelland M."/>
            <person name="Sanderson K.E."/>
            <person name="Spieth J."/>
            <person name="Clifton S.W."/>
            <person name="Latreille P."/>
            <person name="Courtney L."/>
            <person name="Porwollik S."/>
            <person name="Ali J."/>
            <person name="Dante M."/>
            <person name="Du F."/>
            <person name="Hou S."/>
            <person name="Layman D."/>
            <person name="Leonard S."/>
            <person name="Nguyen C."/>
            <person name="Scott K."/>
            <person name="Holmes A."/>
            <person name="Grewal N."/>
            <person name="Mulvaney E."/>
            <person name="Ryan E."/>
            <person name="Sun H."/>
            <person name="Florea L."/>
            <person name="Miller W."/>
            <person name="Stoneking T."/>
            <person name="Nhan M."/>
            <person name="Waterston R."/>
            <person name="Wilson R.K."/>
        </authorList>
    </citation>
    <scope>NUCLEOTIDE SEQUENCE [LARGE SCALE GENOMIC DNA]</scope>
    <source>
        <strain>LT2 / SGSC1412 / ATCC 700720</strain>
    </source>
</reference>